<sequence length="152" mass="17714">MRKLLISLALAIPVFAVDHNLLQKGYEVYKKHCSACHIERATPEQIKKFRMMAMRGEKLPIAAPPMNEVSARVKKFYPGELEFITFVKDYITNPSREKGVCMPMAFKLFGVMPPIGKALSEEEKEAVAYWLYHNYKESWKEMMRKMHGKMMH</sequence>
<accession>O67706</accession>
<gene>
    <name type="ordered locus">aq_1854</name>
</gene>
<evidence type="ECO:0000255" key="1"/>
<evidence type="ECO:0000255" key="2">
    <source>
        <dbReference type="PROSITE-ProRule" id="PRU00433"/>
    </source>
</evidence>
<protein>
    <recommendedName>
        <fullName>Uncharacterized protein aq_1854</fullName>
    </recommendedName>
</protein>
<proteinExistence type="inferred from homology"/>
<name>Y1854_AQUAE</name>
<feature type="signal peptide" evidence="1">
    <location>
        <begin position="1"/>
        <end position="16"/>
    </location>
</feature>
<feature type="chain" id="PRO_0000006607" description="Uncharacterized protein aq_1854">
    <location>
        <begin position="17"/>
        <end position="152"/>
    </location>
</feature>
<feature type="domain" description="Cytochrome c" evidence="2">
    <location>
        <begin position="20"/>
        <end position="135"/>
    </location>
</feature>
<feature type="binding site" description="covalent" evidence="2">
    <location>
        <position position="33"/>
    </location>
    <ligand>
        <name>heme c</name>
        <dbReference type="ChEBI" id="CHEBI:61717"/>
    </ligand>
</feature>
<feature type="binding site" description="covalent" evidence="2">
    <location>
        <position position="36"/>
    </location>
    <ligand>
        <name>heme c</name>
        <dbReference type="ChEBI" id="CHEBI:61717"/>
    </ligand>
</feature>
<feature type="binding site" description="axial binding residue" evidence="2">
    <location>
        <position position="37"/>
    </location>
    <ligand>
        <name>heme c</name>
        <dbReference type="ChEBI" id="CHEBI:61717"/>
    </ligand>
    <ligandPart>
        <name>Fe</name>
        <dbReference type="ChEBI" id="CHEBI:18248"/>
    </ligandPart>
</feature>
<dbReference type="EMBL" id="AE000657">
    <property type="protein sequence ID" value="AAC07670.1"/>
    <property type="molecule type" value="Genomic_DNA"/>
</dbReference>
<dbReference type="PIR" id="H70459">
    <property type="entry name" value="H70459"/>
</dbReference>
<dbReference type="RefSeq" id="NP_214274.1">
    <property type="nucleotide sequence ID" value="NC_000918.1"/>
</dbReference>
<dbReference type="RefSeq" id="WP_010881210.1">
    <property type="nucleotide sequence ID" value="NC_000918.1"/>
</dbReference>
<dbReference type="STRING" id="224324.aq_1854"/>
<dbReference type="EnsemblBacteria" id="AAC07670">
    <property type="protein sequence ID" value="AAC07670"/>
    <property type="gene ID" value="aq_1854"/>
</dbReference>
<dbReference type="KEGG" id="aae:aq_1854"/>
<dbReference type="eggNOG" id="COG2010">
    <property type="taxonomic scope" value="Bacteria"/>
</dbReference>
<dbReference type="HOGENOM" id="CLU_126606_0_0_0"/>
<dbReference type="InParanoid" id="O67706"/>
<dbReference type="OrthoDB" id="14888at2"/>
<dbReference type="Proteomes" id="UP000000798">
    <property type="component" value="Chromosome"/>
</dbReference>
<dbReference type="GO" id="GO:0009055">
    <property type="term" value="F:electron transfer activity"/>
    <property type="evidence" value="ECO:0007669"/>
    <property type="project" value="InterPro"/>
</dbReference>
<dbReference type="GO" id="GO:0020037">
    <property type="term" value="F:heme binding"/>
    <property type="evidence" value="ECO:0007669"/>
    <property type="project" value="InterPro"/>
</dbReference>
<dbReference type="GO" id="GO:0046872">
    <property type="term" value="F:metal ion binding"/>
    <property type="evidence" value="ECO:0007669"/>
    <property type="project" value="UniProtKB-KW"/>
</dbReference>
<dbReference type="Gene3D" id="1.10.760.10">
    <property type="entry name" value="Cytochrome c-like domain"/>
    <property type="match status" value="1"/>
</dbReference>
<dbReference type="InterPro" id="IPR009056">
    <property type="entry name" value="Cyt_c-like_dom"/>
</dbReference>
<dbReference type="InterPro" id="IPR036909">
    <property type="entry name" value="Cyt_c-like_dom_sf"/>
</dbReference>
<dbReference type="Pfam" id="PF13442">
    <property type="entry name" value="Cytochrome_CBB3"/>
    <property type="match status" value="1"/>
</dbReference>
<dbReference type="SUPFAM" id="SSF46626">
    <property type="entry name" value="Cytochrome c"/>
    <property type="match status" value="1"/>
</dbReference>
<dbReference type="PROSITE" id="PS51007">
    <property type="entry name" value="CYTC"/>
    <property type="match status" value="1"/>
</dbReference>
<organism>
    <name type="scientific">Aquifex aeolicus (strain VF5)</name>
    <dbReference type="NCBI Taxonomy" id="224324"/>
    <lineage>
        <taxon>Bacteria</taxon>
        <taxon>Pseudomonadati</taxon>
        <taxon>Aquificota</taxon>
        <taxon>Aquificia</taxon>
        <taxon>Aquificales</taxon>
        <taxon>Aquificaceae</taxon>
        <taxon>Aquifex</taxon>
    </lineage>
</organism>
<reference key="1">
    <citation type="journal article" date="1998" name="Nature">
        <title>The complete genome of the hyperthermophilic bacterium Aquifex aeolicus.</title>
        <authorList>
            <person name="Deckert G."/>
            <person name="Warren P.V."/>
            <person name="Gaasterland T."/>
            <person name="Young W.G."/>
            <person name="Lenox A.L."/>
            <person name="Graham D.E."/>
            <person name="Overbeek R."/>
            <person name="Snead M.A."/>
            <person name="Keller M."/>
            <person name="Aujay M."/>
            <person name="Huber R."/>
            <person name="Feldman R.A."/>
            <person name="Short J.M."/>
            <person name="Olsen G.J."/>
            <person name="Swanson R.V."/>
        </authorList>
    </citation>
    <scope>NUCLEOTIDE SEQUENCE [LARGE SCALE GENOMIC DNA]</scope>
    <source>
        <strain>VF5</strain>
    </source>
</reference>
<keyword id="KW-0249">Electron transport</keyword>
<keyword id="KW-0349">Heme</keyword>
<keyword id="KW-0408">Iron</keyword>
<keyword id="KW-0479">Metal-binding</keyword>
<keyword id="KW-1185">Reference proteome</keyword>
<keyword id="KW-0732">Signal</keyword>
<keyword id="KW-0813">Transport</keyword>